<dbReference type="EC" id="6.1.1.1" evidence="1"/>
<dbReference type="EMBL" id="CP000721">
    <property type="protein sequence ID" value="ABR36723.1"/>
    <property type="molecule type" value="Genomic_DNA"/>
</dbReference>
<dbReference type="RefSeq" id="WP_012060770.1">
    <property type="nucleotide sequence ID" value="NC_009617.1"/>
</dbReference>
<dbReference type="SMR" id="A6M293"/>
<dbReference type="KEGG" id="cbe:Cbei_4615"/>
<dbReference type="eggNOG" id="COG0162">
    <property type="taxonomic scope" value="Bacteria"/>
</dbReference>
<dbReference type="HOGENOM" id="CLU_024003_0_3_9"/>
<dbReference type="Proteomes" id="UP000000565">
    <property type="component" value="Chromosome"/>
</dbReference>
<dbReference type="GO" id="GO:0005829">
    <property type="term" value="C:cytosol"/>
    <property type="evidence" value="ECO:0007669"/>
    <property type="project" value="TreeGrafter"/>
</dbReference>
<dbReference type="GO" id="GO:0005524">
    <property type="term" value="F:ATP binding"/>
    <property type="evidence" value="ECO:0007669"/>
    <property type="project" value="UniProtKB-UniRule"/>
</dbReference>
<dbReference type="GO" id="GO:0003723">
    <property type="term" value="F:RNA binding"/>
    <property type="evidence" value="ECO:0007669"/>
    <property type="project" value="UniProtKB-KW"/>
</dbReference>
<dbReference type="GO" id="GO:0004831">
    <property type="term" value="F:tyrosine-tRNA ligase activity"/>
    <property type="evidence" value="ECO:0007669"/>
    <property type="project" value="UniProtKB-UniRule"/>
</dbReference>
<dbReference type="GO" id="GO:0006437">
    <property type="term" value="P:tyrosyl-tRNA aminoacylation"/>
    <property type="evidence" value="ECO:0007669"/>
    <property type="project" value="UniProtKB-UniRule"/>
</dbReference>
<dbReference type="CDD" id="cd00165">
    <property type="entry name" value="S4"/>
    <property type="match status" value="1"/>
</dbReference>
<dbReference type="CDD" id="cd00805">
    <property type="entry name" value="TyrRS_core"/>
    <property type="match status" value="1"/>
</dbReference>
<dbReference type="FunFam" id="1.10.240.10:FF:000001">
    <property type="entry name" value="Tyrosine--tRNA ligase"/>
    <property type="match status" value="1"/>
</dbReference>
<dbReference type="FunFam" id="3.40.50.620:FF:000008">
    <property type="entry name" value="Tyrosine--tRNA ligase"/>
    <property type="match status" value="1"/>
</dbReference>
<dbReference type="Gene3D" id="3.40.50.620">
    <property type="entry name" value="HUPs"/>
    <property type="match status" value="1"/>
</dbReference>
<dbReference type="Gene3D" id="3.10.290.10">
    <property type="entry name" value="RNA-binding S4 domain"/>
    <property type="match status" value="1"/>
</dbReference>
<dbReference type="Gene3D" id="1.10.240.10">
    <property type="entry name" value="Tyrosyl-Transfer RNA Synthetase"/>
    <property type="match status" value="1"/>
</dbReference>
<dbReference type="HAMAP" id="MF_02006">
    <property type="entry name" value="Tyr_tRNA_synth_type1"/>
    <property type="match status" value="1"/>
</dbReference>
<dbReference type="InterPro" id="IPR001412">
    <property type="entry name" value="aa-tRNA-synth_I_CS"/>
</dbReference>
<dbReference type="InterPro" id="IPR002305">
    <property type="entry name" value="aa-tRNA-synth_Ic"/>
</dbReference>
<dbReference type="InterPro" id="IPR014729">
    <property type="entry name" value="Rossmann-like_a/b/a_fold"/>
</dbReference>
<dbReference type="InterPro" id="IPR036986">
    <property type="entry name" value="S4_RNA-bd_sf"/>
</dbReference>
<dbReference type="InterPro" id="IPR054608">
    <property type="entry name" value="SYY-like_C"/>
</dbReference>
<dbReference type="InterPro" id="IPR002307">
    <property type="entry name" value="Tyr-tRNA-ligase"/>
</dbReference>
<dbReference type="InterPro" id="IPR024088">
    <property type="entry name" value="Tyr-tRNA-ligase_bac-type"/>
</dbReference>
<dbReference type="InterPro" id="IPR024107">
    <property type="entry name" value="Tyr-tRNA-ligase_bac_1"/>
</dbReference>
<dbReference type="NCBIfam" id="TIGR00234">
    <property type="entry name" value="tyrS"/>
    <property type="match status" value="1"/>
</dbReference>
<dbReference type="PANTHER" id="PTHR11766:SF0">
    <property type="entry name" value="TYROSINE--TRNA LIGASE, MITOCHONDRIAL"/>
    <property type="match status" value="1"/>
</dbReference>
<dbReference type="PANTHER" id="PTHR11766">
    <property type="entry name" value="TYROSYL-TRNA SYNTHETASE"/>
    <property type="match status" value="1"/>
</dbReference>
<dbReference type="Pfam" id="PF22421">
    <property type="entry name" value="SYY_C-terminal"/>
    <property type="match status" value="1"/>
</dbReference>
<dbReference type="Pfam" id="PF00579">
    <property type="entry name" value="tRNA-synt_1b"/>
    <property type="match status" value="1"/>
</dbReference>
<dbReference type="PRINTS" id="PR01040">
    <property type="entry name" value="TRNASYNTHTYR"/>
</dbReference>
<dbReference type="SUPFAM" id="SSF55174">
    <property type="entry name" value="Alpha-L RNA-binding motif"/>
    <property type="match status" value="1"/>
</dbReference>
<dbReference type="SUPFAM" id="SSF52374">
    <property type="entry name" value="Nucleotidylyl transferase"/>
    <property type="match status" value="1"/>
</dbReference>
<dbReference type="PROSITE" id="PS00178">
    <property type="entry name" value="AA_TRNA_LIGASE_I"/>
    <property type="match status" value="1"/>
</dbReference>
<dbReference type="PROSITE" id="PS50889">
    <property type="entry name" value="S4"/>
    <property type="match status" value="1"/>
</dbReference>
<comment type="function">
    <text evidence="1">Catalyzes the attachment of tyrosine to tRNA(Tyr) in a two-step reaction: tyrosine is first activated by ATP to form Tyr-AMP and then transferred to the acceptor end of tRNA(Tyr).</text>
</comment>
<comment type="catalytic activity">
    <reaction evidence="1">
        <text>tRNA(Tyr) + L-tyrosine + ATP = L-tyrosyl-tRNA(Tyr) + AMP + diphosphate + H(+)</text>
        <dbReference type="Rhea" id="RHEA:10220"/>
        <dbReference type="Rhea" id="RHEA-COMP:9706"/>
        <dbReference type="Rhea" id="RHEA-COMP:9707"/>
        <dbReference type="ChEBI" id="CHEBI:15378"/>
        <dbReference type="ChEBI" id="CHEBI:30616"/>
        <dbReference type="ChEBI" id="CHEBI:33019"/>
        <dbReference type="ChEBI" id="CHEBI:58315"/>
        <dbReference type="ChEBI" id="CHEBI:78442"/>
        <dbReference type="ChEBI" id="CHEBI:78536"/>
        <dbReference type="ChEBI" id="CHEBI:456215"/>
        <dbReference type="EC" id="6.1.1.1"/>
    </reaction>
</comment>
<comment type="subunit">
    <text evidence="1">Homodimer.</text>
</comment>
<comment type="subcellular location">
    <subcellularLocation>
        <location evidence="1">Cytoplasm</location>
    </subcellularLocation>
</comment>
<comment type="similarity">
    <text evidence="1">Belongs to the class-I aminoacyl-tRNA synthetase family. TyrS type 1 subfamily.</text>
</comment>
<evidence type="ECO:0000255" key="1">
    <source>
        <dbReference type="HAMAP-Rule" id="MF_02006"/>
    </source>
</evidence>
<organism>
    <name type="scientific">Clostridium beijerinckii (strain ATCC 51743 / NCIMB 8052)</name>
    <name type="common">Clostridium acetobutylicum</name>
    <dbReference type="NCBI Taxonomy" id="290402"/>
    <lineage>
        <taxon>Bacteria</taxon>
        <taxon>Bacillati</taxon>
        <taxon>Bacillota</taxon>
        <taxon>Clostridia</taxon>
        <taxon>Eubacteriales</taxon>
        <taxon>Clostridiaceae</taxon>
        <taxon>Clostridium</taxon>
    </lineage>
</organism>
<feature type="chain" id="PRO_1000189272" description="Tyrosine--tRNA ligase">
    <location>
        <begin position="1"/>
        <end position="406"/>
    </location>
</feature>
<feature type="domain" description="S4 RNA-binding" evidence="1">
    <location>
        <begin position="340"/>
        <end position="404"/>
    </location>
</feature>
<feature type="short sequence motif" description="'HIGH' region">
    <location>
        <begin position="40"/>
        <end position="49"/>
    </location>
</feature>
<feature type="short sequence motif" description="'KMSKS' region">
    <location>
        <begin position="228"/>
        <end position="232"/>
    </location>
</feature>
<feature type="binding site" evidence="1">
    <location>
        <position position="35"/>
    </location>
    <ligand>
        <name>L-tyrosine</name>
        <dbReference type="ChEBI" id="CHEBI:58315"/>
    </ligand>
</feature>
<feature type="binding site" evidence="1">
    <location>
        <position position="168"/>
    </location>
    <ligand>
        <name>L-tyrosine</name>
        <dbReference type="ChEBI" id="CHEBI:58315"/>
    </ligand>
</feature>
<feature type="binding site" evidence="1">
    <location>
        <position position="172"/>
    </location>
    <ligand>
        <name>L-tyrosine</name>
        <dbReference type="ChEBI" id="CHEBI:58315"/>
    </ligand>
</feature>
<feature type="binding site" evidence="1">
    <location>
        <position position="231"/>
    </location>
    <ligand>
        <name>ATP</name>
        <dbReference type="ChEBI" id="CHEBI:30616"/>
    </ligand>
</feature>
<sequence length="406" mass="45647">MANVLDELLERGYIKQFTHEEETRKLLENEKITFYIGFDPTADSLHVGHFIAMMFMAHMQRAGHRPIALIGGGTAMVGDPSGKTDMRKMLTKEDIQHNVDSIKKQMERFIDFSDGKAILANNADWLLNLNYVDFLREVGVHFSVNRMLTAECFKQRLEKGLSFLEFNYMLMQGYDFYELNQKYNCKMQLGGDDQWSNMIAGVELVRRKAQGEAMAMTCTLLTNSQGQKMGKTVGGALWLDPAKTSPYDFYQYWRNVDDADVEKCLALLTFLPMDEVRRLGALEGAEINGAKKVLAYEITKLVHGEEEAKKAEEAATALFAGGADMSNVPTVTIAKEEIGLPILDVMASTKIIPSKKEGRRLIEQGGLSINGVKVEGVNRILTEEDFQDGAVLIKRGKKNYNKIEIK</sequence>
<accession>A6M293</accession>
<reference key="1">
    <citation type="submission" date="2007-06" db="EMBL/GenBank/DDBJ databases">
        <title>Complete sequence of Clostridium beijerinckii NCIMB 8052.</title>
        <authorList>
            <consortium name="US DOE Joint Genome Institute"/>
            <person name="Copeland A."/>
            <person name="Lucas S."/>
            <person name="Lapidus A."/>
            <person name="Barry K."/>
            <person name="Detter J.C."/>
            <person name="Glavina del Rio T."/>
            <person name="Hammon N."/>
            <person name="Israni S."/>
            <person name="Dalin E."/>
            <person name="Tice H."/>
            <person name="Pitluck S."/>
            <person name="Sims D."/>
            <person name="Brettin T."/>
            <person name="Bruce D."/>
            <person name="Tapia R."/>
            <person name="Brainard J."/>
            <person name="Schmutz J."/>
            <person name="Larimer F."/>
            <person name="Land M."/>
            <person name="Hauser L."/>
            <person name="Kyrpides N."/>
            <person name="Mikhailova N."/>
            <person name="Bennet G."/>
            <person name="Cann I."/>
            <person name="Chen J.-S."/>
            <person name="Contreras A.L."/>
            <person name="Jones D."/>
            <person name="Kashket E."/>
            <person name="Mitchell W."/>
            <person name="Stoddard S."/>
            <person name="Schwarz W."/>
            <person name="Qureshi N."/>
            <person name="Young M."/>
            <person name="Shi Z."/>
            <person name="Ezeji T."/>
            <person name="White B."/>
            <person name="Blaschek H."/>
            <person name="Richardson P."/>
        </authorList>
    </citation>
    <scope>NUCLEOTIDE SEQUENCE [LARGE SCALE GENOMIC DNA]</scope>
    <source>
        <strain>ATCC 51743 / NCIMB 8052</strain>
    </source>
</reference>
<gene>
    <name evidence="1" type="primary">tyrS</name>
    <name type="ordered locus">Cbei_4615</name>
</gene>
<keyword id="KW-0030">Aminoacyl-tRNA synthetase</keyword>
<keyword id="KW-0067">ATP-binding</keyword>
<keyword id="KW-0963">Cytoplasm</keyword>
<keyword id="KW-0436">Ligase</keyword>
<keyword id="KW-0547">Nucleotide-binding</keyword>
<keyword id="KW-0648">Protein biosynthesis</keyword>
<keyword id="KW-0694">RNA-binding</keyword>
<protein>
    <recommendedName>
        <fullName evidence="1">Tyrosine--tRNA ligase</fullName>
        <ecNumber evidence="1">6.1.1.1</ecNumber>
    </recommendedName>
    <alternativeName>
        <fullName evidence="1">Tyrosyl-tRNA synthetase</fullName>
        <shortName evidence="1">TyrRS</shortName>
    </alternativeName>
</protein>
<name>SYY_CLOB8</name>
<proteinExistence type="inferred from homology"/>